<comment type="function">
    <text evidence="1 4">A light-sensitive calcium channel that is required for inositide-mediated Ca(2+) entry in the retina during phospholipase C (PLC)-mediated phototransduction (By similarity). Forms a regulated cation channel when heteromultimerized with trpl.</text>
</comment>
<comment type="subunit">
    <text evidence="4">Interacts preferentially with trpl and interacts to a lower extent with trp.</text>
</comment>
<comment type="subcellular location">
    <subcellularLocation>
        <location evidence="4">Cell projection</location>
        <location evidence="4">Rhabdomere membrane</location>
        <topology evidence="5">Multi-pass membrane protein</topology>
    </subcellularLocation>
</comment>
<comment type="tissue specificity">
    <text evidence="4">Expressed predominantly in the rhabdomeres of photoreceptor cells.</text>
</comment>
<comment type="similarity">
    <text evidence="5">Belongs to the transient receptor (TC 1.A.4) family. STrpC subfamily.</text>
</comment>
<feature type="chain" id="PRO_0000215358" description="Transient receptor potential-gamma protein">
    <location>
        <begin position="1"/>
        <end position="1128"/>
    </location>
</feature>
<feature type="topological domain" description="Cytoplasmic" evidence="2">
    <location>
        <begin position="1"/>
        <end position="325"/>
    </location>
</feature>
<feature type="transmembrane region" description="Helical" evidence="2">
    <location>
        <begin position="326"/>
        <end position="346"/>
    </location>
</feature>
<feature type="topological domain" description="Extracellular" evidence="2">
    <location>
        <begin position="347"/>
        <end position="403"/>
    </location>
</feature>
<feature type="transmembrane region" description="Helical" evidence="2">
    <location>
        <begin position="404"/>
        <end position="424"/>
    </location>
</feature>
<feature type="topological domain" description="Cytoplasmic" evidence="2">
    <location>
        <begin position="425"/>
        <end position="444"/>
    </location>
</feature>
<feature type="transmembrane region" description="Helical" evidence="2">
    <location>
        <begin position="445"/>
        <end position="465"/>
    </location>
</feature>
<feature type="topological domain" description="Extracellular" evidence="2">
    <location>
        <begin position="466"/>
        <end position="492"/>
    </location>
</feature>
<feature type="transmembrane region" description="Helical" evidence="2">
    <location>
        <begin position="493"/>
        <end position="513"/>
    </location>
</feature>
<feature type="topological domain" description="Cytoplasmic" evidence="2">
    <location>
        <begin position="514"/>
        <end position="535"/>
    </location>
</feature>
<feature type="transmembrane region" description="Helical" evidence="2">
    <location>
        <begin position="536"/>
        <end position="556"/>
    </location>
</feature>
<feature type="topological domain" description="Extracellular" evidence="2">
    <location>
        <begin position="557"/>
        <end position="629"/>
    </location>
</feature>
<feature type="transmembrane region" description="Helical" evidence="2">
    <location>
        <begin position="630"/>
        <end position="650"/>
    </location>
</feature>
<feature type="topological domain" description="Cytoplasmic" evidence="2">
    <location>
        <begin position="651"/>
        <end position="1128"/>
    </location>
</feature>
<feature type="repeat" description="ANK 1">
    <location>
        <begin position="57"/>
        <end position="86"/>
    </location>
</feature>
<feature type="repeat" description="ANK 2">
    <location>
        <begin position="131"/>
        <end position="160"/>
    </location>
</feature>
<feature type="region of interest" description="Disordered" evidence="3">
    <location>
        <begin position="865"/>
        <end position="898"/>
    </location>
</feature>
<feature type="region of interest" description="Disordered" evidence="3">
    <location>
        <begin position="1064"/>
        <end position="1111"/>
    </location>
</feature>
<feature type="compositionally biased region" description="Low complexity" evidence="3">
    <location>
        <begin position="878"/>
        <end position="893"/>
    </location>
</feature>
<feature type="compositionally biased region" description="Polar residues" evidence="3">
    <location>
        <begin position="1085"/>
        <end position="1111"/>
    </location>
</feature>
<feature type="sequence conflict" description="In Ref. 1; CAB96204/CAB96205." evidence="5" ref="1">
    <original>S</original>
    <variation>G</variation>
    <location>
        <position position="195"/>
    </location>
</feature>
<feature type="sequence conflict" description="In Ref. 1; CAB96204/CAB96205." evidence="5" ref="1">
    <original>F</original>
    <variation>L</variation>
    <location>
        <position position="222"/>
    </location>
</feature>
<feature type="sequence conflict" description="In Ref. 1; CAB96204/CAB96205." evidence="5" ref="1">
    <original>D</original>
    <variation>N</variation>
    <location>
        <position position="1053"/>
    </location>
</feature>
<evidence type="ECO:0000250" key="1"/>
<evidence type="ECO:0000255" key="2"/>
<evidence type="ECO:0000256" key="3">
    <source>
        <dbReference type="SAM" id="MobiDB-lite"/>
    </source>
</evidence>
<evidence type="ECO:0000269" key="4">
    <source>
    </source>
</evidence>
<evidence type="ECO:0000305" key="5"/>
<proteinExistence type="evidence at protein level"/>
<name>TRPG_DROME</name>
<accession>Q9VJJ7</accession>
<accession>A4V0S8</accession>
<accession>Q9N6L1</accession>
<gene>
    <name type="primary">Trpgamma</name>
    <name type="ORF">CG5996</name>
</gene>
<keyword id="KW-0040">ANK repeat</keyword>
<keyword id="KW-0106">Calcium</keyword>
<keyword id="KW-0107">Calcium channel</keyword>
<keyword id="KW-0109">Calcium transport</keyword>
<keyword id="KW-1003">Cell membrane</keyword>
<keyword id="KW-0966">Cell projection</keyword>
<keyword id="KW-0407">Ion channel</keyword>
<keyword id="KW-0406">Ion transport</keyword>
<keyword id="KW-0472">Membrane</keyword>
<keyword id="KW-1185">Reference proteome</keyword>
<keyword id="KW-0677">Repeat</keyword>
<keyword id="KW-0716">Sensory transduction</keyword>
<keyword id="KW-0812">Transmembrane</keyword>
<keyword id="KW-1133">Transmembrane helix</keyword>
<keyword id="KW-0813">Transport</keyword>
<keyword id="KW-0844">Vision</keyword>
<protein>
    <recommendedName>
        <fullName>Transient receptor potential-gamma protein</fullName>
        <shortName>TRPgamma</shortName>
    </recommendedName>
    <alternativeName>
        <fullName>Transient receptor potential cation channel gamma</fullName>
    </alternativeName>
</protein>
<organism>
    <name type="scientific">Drosophila melanogaster</name>
    <name type="common">Fruit fly</name>
    <dbReference type="NCBI Taxonomy" id="7227"/>
    <lineage>
        <taxon>Eukaryota</taxon>
        <taxon>Metazoa</taxon>
        <taxon>Ecdysozoa</taxon>
        <taxon>Arthropoda</taxon>
        <taxon>Hexapoda</taxon>
        <taxon>Insecta</taxon>
        <taxon>Pterygota</taxon>
        <taxon>Neoptera</taxon>
        <taxon>Endopterygota</taxon>
        <taxon>Diptera</taxon>
        <taxon>Brachycera</taxon>
        <taxon>Muscomorpha</taxon>
        <taxon>Ephydroidea</taxon>
        <taxon>Drosophilidae</taxon>
        <taxon>Drosophila</taxon>
        <taxon>Sophophora</taxon>
    </lineage>
</organism>
<dbReference type="EMBL" id="AJ277967">
    <property type="protein sequence ID" value="CAB96204.1"/>
    <property type="molecule type" value="mRNA"/>
</dbReference>
<dbReference type="EMBL" id="AJ277968">
    <property type="protein sequence ID" value="CAB96205.1"/>
    <property type="molecule type" value="mRNA"/>
</dbReference>
<dbReference type="EMBL" id="AE014134">
    <property type="protein sequence ID" value="AAF53548.2"/>
    <property type="molecule type" value="Genomic_DNA"/>
</dbReference>
<dbReference type="EMBL" id="AE014134">
    <property type="protein sequence ID" value="AAN10950.1"/>
    <property type="molecule type" value="Genomic_DNA"/>
</dbReference>
<dbReference type="RefSeq" id="NP_609802.1">
    <property type="nucleotide sequence ID" value="NM_135958.5"/>
</dbReference>
<dbReference type="RefSeq" id="NP_723983.1">
    <property type="nucleotide sequence ID" value="NM_165169.5"/>
</dbReference>
<dbReference type="SMR" id="Q9VJJ7"/>
<dbReference type="BioGRID" id="60999">
    <property type="interactions" value="1"/>
</dbReference>
<dbReference type="FunCoup" id="Q9VJJ7">
    <property type="interactions" value="68"/>
</dbReference>
<dbReference type="IntAct" id="Q9VJJ7">
    <property type="interactions" value="2"/>
</dbReference>
<dbReference type="STRING" id="7227.FBpp0307143"/>
<dbReference type="TCDB" id="1.A.4.1.15">
    <property type="family name" value="the transient receptor potential ca2+/cation channel (trp-cc) family"/>
</dbReference>
<dbReference type="PaxDb" id="7227-FBpp0080498"/>
<dbReference type="EnsemblMetazoa" id="FBtr0080945">
    <property type="protein sequence ID" value="FBpp0080498"/>
    <property type="gene ID" value="FBgn0032593"/>
</dbReference>
<dbReference type="EnsemblMetazoa" id="FBtr0080946">
    <property type="protein sequence ID" value="FBpp0080499"/>
    <property type="gene ID" value="FBgn0032593"/>
</dbReference>
<dbReference type="GeneID" id="34991"/>
<dbReference type="KEGG" id="dme:Dmel_CG5996"/>
<dbReference type="UCSC" id="CG5996-RA">
    <property type="organism name" value="d. melanogaster"/>
</dbReference>
<dbReference type="AGR" id="FB:FBgn0032593"/>
<dbReference type="CTD" id="34991"/>
<dbReference type="FlyBase" id="FBgn0032593">
    <property type="gene designation" value="Trpgamma"/>
</dbReference>
<dbReference type="VEuPathDB" id="VectorBase:FBgn0032593"/>
<dbReference type="eggNOG" id="KOG3609">
    <property type="taxonomic scope" value="Eukaryota"/>
</dbReference>
<dbReference type="GeneTree" id="ENSGT01060000248594"/>
<dbReference type="HOGENOM" id="CLU_005716_3_1_1"/>
<dbReference type="InParanoid" id="Q9VJJ7"/>
<dbReference type="OrthoDB" id="2373987at2759"/>
<dbReference type="PhylomeDB" id="Q9VJJ7"/>
<dbReference type="Reactome" id="R-DME-3295583">
    <property type="pathway name" value="TRP channels"/>
</dbReference>
<dbReference type="Reactome" id="R-DME-5578775">
    <property type="pathway name" value="Ion homeostasis"/>
</dbReference>
<dbReference type="Reactome" id="R-DME-983695">
    <property type="pathway name" value="Antigen activates B Cell Receptor (BCR) leading to generation of second messengers"/>
</dbReference>
<dbReference type="BioGRID-ORCS" id="34991">
    <property type="hits" value="0 hits in 3 CRISPR screens"/>
</dbReference>
<dbReference type="GenomeRNAi" id="34991"/>
<dbReference type="PRO" id="PR:Q9VJJ7"/>
<dbReference type="Proteomes" id="UP000000803">
    <property type="component" value="Chromosome 2L"/>
</dbReference>
<dbReference type="Bgee" id="FBgn0032593">
    <property type="expression patterns" value="Expressed in visceral muscle cell in digestive tract and 13 other cell types or tissues"/>
</dbReference>
<dbReference type="ExpressionAtlas" id="Q9VJJ7">
    <property type="expression patterns" value="baseline and differential"/>
</dbReference>
<dbReference type="GO" id="GO:0034703">
    <property type="term" value="C:cation channel complex"/>
    <property type="evidence" value="ECO:0000353"/>
    <property type="project" value="FlyBase"/>
</dbReference>
<dbReference type="GO" id="GO:0043025">
    <property type="term" value="C:neuronal cell body"/>
    <property type="evidence" value="ECO:0000314"/>
    <property type="project" value="FlyBase"/>
</dbReference>
<dbReference type="GO" id="GO:0005886">
    <property type="term" value="C:plasma membrane"/>
    <property type="evidence" value="ECO:0000318"/>
    <property type="project" value="GO_Central"/>
</dbReference>
<dbReference type="GO" id="GO:1990635">
    <property type="term" value="C:proximal dendrite"/>
    <property type="evidence" value="ECO:0000314"/>
    <property type="project" value="FlyBase"/>
</dbReference>
<dbReference type="GO" id="GO:0016028">
    <property type="term" value="C:rhabdomere"/>
    <property type="evidence" value="ECO:0000314"/>
    <property type="project" value="UniProtKB"/>
</dbReference>
<dbReference type="GO" id="GO:0033583">
    <property type="term" value="C:rhabdomere membrane"/>
    <property type="evidence" value="ECO:0007669"/>
    <property type="project" value="UniProtKB-SubCell"/>
</dbReference>
<dbReference type="GO" id="GO:0005262">
    <property type="term" value="F:calcium channel activity"/>
    <property type="evidence" value="ECO:0000250"/>
    <property type="project" value="UniProtKB"/>
</dbReference>
<dbReference type="GO" id="GO:0070679">
    <property type="term" value="F:inositol 1,4,5 trisphosphate binding"/>
    <property type="evidence" value="ECO:0000318"/>
    <property type="project" value="GO_Central"/>
</dbReference>
<dbReference type="GO" id="GO:0008381">
    <property type="term" value="F:mechanosensitive monoatomic ion channel activity"/>
    <property type="evidence" value="ECO:0000314"/>
    <property type="project" value="FlyBase"/>
</dbReference>
<dbReference type="GO" id="GO:0005261">
    <property type="term" value="F:monoatomic cation channel activity"/>
    <property type="evidence" value="ECO:0000314"/>
    <property type="project" value="FlyBase"/>
</dbReference>
<dbReference type="GO" id="GO:0015279">
    <property type="term" value="F:store-operated calcium channel activity"/>
    <property type="evidence" value="ECO:0000318"/>
    <property type="project" value="GO_Central"/>
</dbReference>
<dbReference type="GO" id="GO:0007628">
    <property type="term" value="P:adult walking behavior"/>
    <property type="evidence" value="ECO:0000315"/>
    <property type="project" value="FlyBase"/>
</dbReference>
<dbReference type="GO" id="GO:0070588">
    <property type="term" value="P:calcium ion transmembrane transport"/>
    <property type="evidence" value="ECO:0000318"/>
    <property type="project" value="GO_Central"/>
</dbReference>
<dbReference type="GO" id="GO:0006816">
    <property type="term" value="P:calcium ion transport"/>
    <property type="evidence" value="ECO:0000250"/>
    <property type="project" value="UniProtKB"/>
</dbReference>
<dbReference type="GO" id="GO:0050908">
    <property type="term" value="P:detection of light stimulus involved in visual perception"/>
    <property type="evidence" value="ECO:0000250"/>
    <property type="project" value="UniProtKB"/>
</dbReference>
<dbReference type="GO" id="GO:0006812">
    <property type="term" value="P:monoatomic cation transport"/>
    <property type="evidence" value="ECO:0000314"/>
    <property type="project" value="FlyBase"/>
</dbReference>
<dbReference type="GO" id="GO:0050884">
    <property type="term" value="P:neuromuscular process controlling posture"/>
    <property type="evidence" value="ECO:0000315"/>
    <property type="project" value="FlyBase"/>
</dbReference>
<dbReference type="GO" id="GO:0051480">
    <property type="term" value="P:regulation of cytosolic calcium ion concentration"/>
    <property type="evidence" value="ECO:0000318"/>
    <property type="project" value="GO_Central"/>
</dbReference>
<dbReference type="GO" id="GO:0009416">
    <property type="term" value="P:response to light stimulus"/>
    <property type="evidence" value="ECO:0000250"/>
    <property type="project" value="UniProtKB"/>
</dbReference>
<dbReference type="FunFam" id="1.25.40.20:FF:000221">
    <property type="entry name" value="Transient receptor potential-gamma protein"/>
    <property type="match status" value="1"/>
</dbReference>
<dbReference type="Gene3D" id="1.25.40.20">
    <property type="entry name" value="Ankyrin repeat-containing domain"/>
    <property type="match status" value="1"/>
</dbReference>
<dbReference type="InterPro" id="IPR002110">
    <property type="entry name" value="Ankyrin_rpt"/>
</dbReference>
<dbReference type="InterPro" id="IPR036770">
    <property type="entry name" value="Ankyrin_rpt-contain_sf"/>
</dbReference>
<dbReference type="InterPro" id="IPR005821">
    <property type="entry name" value="Ion_trans_dom"/>
</dbReference>
<dbReference type="InterPro" id="IPR013555">
    <property type="entry name" value="TRP_dom"/>
</dbReference>
<dbReference type="InterPro" id="IPR002153">
    <property type="entry name" value="TRPC_channel"/>
</dbReference>
<dbReference type="NCBIfam" id="TIGR00870">
    <property type="entry name" value="trp"/>
    <property type="match status" value="1"/>
</dbReference>
<dbReference type="PANTHER" id="PTHR10117">
    <property type="entry name" value="TRANSIENT RECEPTOR POTENTIAL CHANNEL"/>
    <property type="match status" value="1"/>
</dbReference>
<dbReference type="PANTHER" id="PTHR10117:SF54">
    <property type="entry name" value="TRANSIENT RECEPTOR POTENTIAL-GAMMA PROTEIN"/>
    <property type="match status" value="1"/>
</dbReference>
<dbReference type="Pfam" id="PF00023">
    <property type="entry name" value="Ank"/>
    <property type="match status" value="1"/>
</dbReference>
<dbReference type="Pfam" id="PF12796">
    <property type="entry name" value="Ank_2"/>
    <property type="match status" value="1"/>
</dbReference>
<dbReference type="Pfam" id="PF00520">
    <property type="entry name" value="Ion_trans"/>
    <property type="match status" value="1"/>
</dbReference>
<dbReference type="Pfam" id="PF08344">
    <property type="entry name" value="TRP_2"/>
    <property type="match status" value="1"/>
</dbReference>
<dbReference type="PRINTS" id="PR01097">
    <property type="entry name" value="TRNSRECEPTRP"/>
</dbReference>
<dbReference type="SMART" id="SM00248">
    <property type="entry name" value="ANK"/>
    <property type="match status" value="2"/>
</dbReference>
<dbReference type="SMART" id="SM01420">
    <property type="entry name" value="TRP_2"/>
    <property type="match status" value="1"/>
</dbReference>
<dbReference type="SUPFAM" id="SSF48403">
    <property type="entry name" value="Ankyrin repeat"/>
    <property type="match status" value="1"/>
</dbReference>
<dbReference type="PROSITE" id="PS50297">
    <property type="entry name" value="ANK_REP_REGION"/>
    <property type="match status" value="1"/>
</dbReference>
<dbReference type="PROSITE" id="PS50088">
    <property type="entry name" value="ANK_REPEAT"/>
    <property type="match status" value="1"/>
</dbReference>
<reference key="1">
    <citation type="journal article" date="2000" name="Neuron">
        <title>TRPgamma, a Drosophila TRP-related subunit, forms a regulated cation channel with TRPL.</title>
        <authorList>
            <person name="Xu X.-Z.S."/>
            <person name="Chien F."/>
            <person name="Butler A."/>
            <person name="Salkoff L."/>
            <person name="Montell C."/>
        </authorList>
    </citation>
    <scope>NUCLEOTIDE SEQUENCE [MRNA]</scope>
    <scope>FUNCTION</scope>
    <scope>INTERACTION WITH TRP AND TRPL</scope>
    <scope>TISSUE SPECIFICITY</scope>
    <source>
        <tissue>Head</tissue>
    </source>
</reference>
<reference key="2">
    <citation type="journal article" date="2000" name="Science">
        <title>The genome sequence of Drosophila melanogaster.</title>
        <authorList>
            <person name="Adams M.D."/>
            <person name="Celniker S.E."/>
            <person name="Holt R.A."/>
            <person name="Evans C.A."/>
            <person name="Gocayne J.D."/>
            <person name="Amanatides P.G."/>
            <person name="Scherer S.E."/>
            <person name="Li P.W."/>
            <person name="Hoskins R.A."/>
            <person name="Galle R.F."/>
            <person name="George R.A."/>
            <person name="Lewis S.E."/>
            <person name="Richards S."/>
            <person name="Ashburner M."/>
            <person name="Henderson S.N."/>
            <person name="Sutton G.G."/>
            <person name="Wortman J.R."/>
            <person name="Yandell M.D."/>
            <person name="Zhang Q."/>
            <person name="Chen L.X."/>
            <person name="Brandon R.C."/>
            <person name="Rogers Y.-H.C."/>
            <person name="Blazej R.G."/>
            <person name="Champe M."/>
            <person name="Pfeiffer B.D."/>
            <person name="Wan K.H."/>
            <person name="Doyle C."/>
            <person name="Baxter E.G."/>
            <person name="Helt G."/>
            <person name="Nelson C.R."/>
            <person name="Miklos G.L.G."/>
            <person name="Abril J.F."/>
            <person name="Agbayani A."/>
            <person name="An H.-J."/>
            <person name="Andrews-Pfannkoch C."/>
            <person name="Baldwin D."/>
            <person name="Ballew R.M."/>
            <person name="Basu A."/>
            <person name="Baxendale J."/>
            <person name="Bayraktaroglu L."/>
            <person name="Beasley E.M."/>
            <person name="Beeson K.Y."/>
            <person name="Benos P.V."/>
            <person name="Berman B.P."/>
            <person name="Bhandari D."/>
            <person name="Bolshakov S."/>
            <person name="Borkova D."/>
            <person name="Botchan M.R."/>
            <person name="Bouck J."/>
            <person name="Brokstein P."/>
            <person name="Brottier P."/>
            <person name="Burtis K.C."/>
            <person name="Busam D.A."/>
            <person name="Butler H."/>
            <person name="Cadieu E."/>
            <person name="Center A."/>
            <person name="Chandra I."/>
            <person name="Cherry J.M."/>
            <person name="Cawley S."/>
            <person name="Dahlke C."/>
            <person name="Davenport L.B."/>
            <person name="Davies P."/>
            <person name="de Pablos B."/>
            <person name="Delcher A."/>
            <person name="Deng Z."/>
            <person name="Mays A.D."/>
            <person name="Dew I."/>
            <person name="Dietz S.M."/>
            <person name="Dodson K."/>
            <person name="Doup L.E."/>
            <person name="Downes M."/>
            <person name="Dugan-Rocha S."/>
            <person name="Dunkov B.C."/>
            <person name="Dunn P."/>
            <person name="Durbin K.J."/>
            <person name="Evangelista C.C."/>
            <person name="Ferraz C."/>
            <person name="Ferriera S."/>
            <person name="Fleischmann W."/>
            <person name="Fosler C."/>
            <person name="Gabrielian A.E."/>
            <person name="Garg N.S."/>
            <person name="Gelbart W.M."/>
            <person name="Glasser K."/>
            <person name="Glodek A."/>
            <person name="Gong F."/>
            <person name="Gorrell J.H."/>
            <person name="Gu Z."/>
            <person name="Guan P."/>
            <person name="Harris M."/>
            <person name="Harris N.L."/>
            <person name="Harvey D.A."/>
            <person name="Heiman T.J."/>
            <person name="Hernandez J.R."/>
            <person name="Houck J."/>
            <person name="Hostin D."/>
            <person name="Houston K.A."/>
            <person name="Howland T.J."/>
            <person name="Wei M.-H."/>
            <person name="Ibegwam C."/>
            <person name="Jalali M."/>
            <person name="Kalush F."/>
            <person name="Karpen G.H."/>
            <person name="Ke Z."/>
            <person name="Kennison J.A."/>
            <person name="Ketchum K.A."/>
            <person name="Kimmel B.E."/>
            <person name="Kodira C.D."/>
            <person name="Kraft C.L."/>
            <person name="Kravitz S."/>
            <person name="Kulp D."/>
            <person name="Lai Z."/>
            <person name="Lasko P."/>
            <person name="Lei Y."/>
            <person name="Levitsky A.A."/>
            <person name="Li J.H."/>
            <person name="Li Z."/>
            <person name="Liang Y."/>
            <person name="Lin X."/>
            <person name="Liu X."/>
            <person name="Mattei B."/>
            <person name="McIntosh T.C."/>
            <person name="McLeod M.P."/>
            <person name="McPherson D."/>
            <person name="Merkulov G."/>
            <person name="Milshina N.V."/>
            <person name="Mobarry C."/>
            <person name="Morris J."/>
            <person name="Moshrefi A."/>
            <person name="Mount S.M."/>
            <person name="Moy M."/>
            <person name="Murphy B."/>
            <person name="Murphy L."/>
            <person name="Muzny D.M."/>
            <person name="Nelson D.L."/>
            <person name="Nelson D.R."/>
            <person name="Nelson K.A."/>
            <person name="Nixon K."/>
            <person name="Nusskern D.R."/>
            <person name="Pacleb J.M."/>
            <person name="Palazzolo M."/>
            <person name="Pittman G.S."/>
            <person name="Pan S."/>
            <person name="Pollard J."/>
            <person name="Puri V."/>
            <person name="Reese M.G."/>
            <person name="Reinert K."/>
            <person name="Remington K."/>
            <person name="Saunders R.D.C."/>
            <person name="Scheeler F."/>
            <person name="Shen H."/>
            <person name="Shue B.C."/>
            <person name="Siden-Kiamos I."/>
            <person name="Simpson M."/>
            <person name="Skupski M.P."/>
            <person name="Smith T.J."/>
            <person name="Spier E."/>
            <person name="Spradling A.C."/>
            <person name="Stapleton M."/>
            <person name="Strong R."/>
            <person name="Sun E."/>
            <person name="Svirskas R."/>
            <person name="Tector C."/>
            <person name="Turner R."/>
            <person name="Venter E."/>
            <person name="Wang A.H."/>
            <person name="Wang X."/>
            <person name="Wang Z.-Y."/>
            <person name="Wassarman D.A."/>
            <person name="Weinstock G.M."/>
            <person name="Weissenbach J."/>
            <person name="Williams S.M."/>
            <person name="Woodage T."/>
            <person name="Worley K.C."/>
            <person name="Wu D."/>
            <person name="Yang S."/>
            <person name="Yao Q.A."/>
            <person name="Ye J."/>
            <person name="Yeh R.-F."/>
            <person name="Zaveri J.S."/>
            <person name="Zhan M."/>
            <person name="Zhang G."/>
            <person name="Zhao Q."/>
            <person name="Zheng L."/>
            <person name="Zheng X.H."/>
            <person name="Zhong F.N."/>
            <person name="Zhong W."/>
            <person name="Zhou X."/>
            <person name="Zhu S.C."/>
            <person name="Zhu X."/>
            <person name="Smith H.O."/>
            <person name="Gibbs R.A."/>
            <person name="Myers E.W."/>
            <person name="Rubin G.M."/>
            <person name="Venter J.C."/>
        </authorList>
    </citation>
    <scope>NUCLEOTIDE SEQUENCE [LARGE SCALE GENOMIC DNA]</scope>
    <source>
        <strain>Berkeley</strain>
    </source>
</reference>
<reference key="3">
    <citation type="journal article" date="2002" name="Genome Biol.">
        <title>Annotation of the Drosophila melanogaster euchromatic genome: a systematic review.</title>
        <authorList>
            <person name="Misra S."/>
            <person name="Crosby M.A."/>
            <person name="Mungall C.J."/>
            <person name="Matthews B.B."/>
            <person name="Campbell K.S."/>
            <person name="Hradecky P."/>
            <person name="Huang Y."/>
            <person name="Kaminker J.S."/>
            <person name="Millburn G.H."/>
            <person name="Prochnik S.E."/>
            <person name="Smith C.D."/>
            <person name="Tupy J.L."/>
            <person name="Whitfield E.J."/>
            <person name="Bayraktaroglu L."/>
            <person name="Berman B.P."/>
            <person name="Bettencourt B.R."/>
            <person name="Celniker S.E."/>
            <person name="de Grey A.D.N.J."/>
            <person name="Drysdale R.A."/>
            <person name="Harris N.L."/>
            <person name="Richter J."/>
            <person name="Russo S."/>
            <person name="Schroeder A.J."/>
            <person name="Shu S.Q."/>
            <person name="Stapleton M."/>
            <person name="Yamada C."/>
            <person name="Ashburner M."/>
            <person name="Gelbart W.M."/>
            <person name="Rubin G.M."/>
            <person name="Lewis S.E."/>
        </authorList>
    </citation>
    <scope>GENOME REANNOTATION</scope>
    <source>
        <strain>Berkeley</strain>
    </source>
</reference>
<sequence length="1128" mass="127109">MMEEENTIRPHQEIRQLTLEEKKFLLAVERGDMAGTRRMLQKAQDTEYINVNCVDPLGRTALLMAIDNENLEMVELLINYNVDTKDALLHSISEEFVEAVEVLLDHENVTFHSEGNHSWESASEDTSTFTPDITPLILAAHRDNYEIIKILLDRGAVLPMPHDVRCGCDECVQSRQEDSLRHSRSRINAYRALASPSLIALSSKDPILTAFELSWELRRLSFLEHEFKNEYQELRKQCQDFATALLDHTRTSHELEILLNHDPTGPVYEHGERMHLNRLKLAIKLRQKKFVAHSNVQQLLASIWYEGLPGFRRKNMALQAVDIIRIGIMFPIFSLAYILAPYSSIGQTMRKPFIKFICHSASYFTFLFLLMLASQRIETFIGGWFFADSSGMLNTMEELPTKRGAKPTFIEWLILAWVSGLIWSEVKQLWDVGLQEYLNDMWNVIDFVTNSLYVATVALRVVSFFQVQKEMIYNSHATDLPRERWDAWDPMLISEGLFSAANIFSSLKLVYIFSVNPHLGPLQVSLSRMVMDIMKFFFLYVLVLFAFGSGLNQLLWYYADLEKKRCPEVSPMSALLNMNGTNDPNACIVWRRFSNLFETTQTLFWAVFGLIDLDSFELDGIKIFTRFWGMLMFGTYSVINIVVLLNLLIAMMNHSYQLISERADVEWKFARSKLWISYFEEGGTCPPPFNIIPTPKSIWYAIKWMRRVFCSGSSAARREHLKTIRRKAQQASDRDFKYQQIMRNLVRRYVTVEQRKAESQGVTEDDVNEIKQDISAFRCELVEILKNSGMDTNVTAGQGGGGGGKKNRQKERRLMKGFNIAPPGSTGSLAPVAEFSTSLDNYDNQHEILSSTLSTLFTPNFMHKRQQSQAGSGGGGSESPTTPTAPQGTQGAAMTASSQVTKYNKSALKPYNKRIAGHKKRWGTLIEAAKVGNVSKMLGRSKSEDSVCNSSHTSTPVHGQMRVTYAQNSPQQEYGYHGETSSTTISTPTPTISVVSNSPAAHAGVGSHFFHTTSGLTAIAALKRKRKKFSSSKNICPVTESVAAANAAEILNDKTLKRVSSYPAAEAGVQHNPAQLVKPRRHEQTQSQHDSVETNSTFTLSIDPSNTSVNSREPLISTSCVSTTGAIG</sequence>